<accession>Q5I128</accession>
<protein>
    <recommendedName>
        <fullName>Probable tyrosine phosphatase protein N1</fullName>
        <shortName>PTP-N1</shortName>
        <ecNumber>3.1.3.48</ecNumber>
    </recommendedName>
</protein>
<comment type="catalytic activity">
    <reaction>
        <text>O-phospho-L-tyrosyl-[protein] + H2O = L-tyrosyl-[protein] + phosphate</text>
        <dbReference type="Rhea" id="RHEA:10684"/>
        <dbReference type="Rhea" id="RHEA-COMP:10136"/>
        <dbReference type="Rhea" id="RHEA-COMP:20101"/>
        <dbReference type="ChEBI" id="CHEBI:15377"/>
        <dbReference type="ChEBI" id="CHEBI:43474"/>
        <dbReference type="ChEBI" id="CHEBI:46858"/>
        <dbReference type="ChEBI" id="CHEBI:61978"/>
        <dbReference type="EC" id="3.1.3.48"/>
    </reaction>
</comment>
<comment type="similarity">
    <text evidence="2">Belongs to the protein-tyrosine phosphatase family.</text>
</comment>
<gene>
    <name type="primary">N3</name>
</gene>
<proteinExistence type="inferred from homology"/>
<evidence type="ECO:0000255" key="1">
    <source>
        <dbReference type="PROSITE-ProRule" id="PRU00160"/>
    </source>
</evidence>
<evidence type="ECO:0000305" key="2"/>
<dbReference type="EC" id="3.1.3.48"/>
<dbReference type="EMBL" id="AY875689">
    <property type="protein sequence ID" value="AAW51807.1"/>
    <property type="molecule type" value="Genomic_DNA"/>
</dbReference>
<dbReference type="RefSeq" id="YP_239400.1">
    <property type="nucleotide sequence ID" value="NC_007039.1"/>
</dbReference>
<dbReference type="SMR" id="Q5I128"/>
<dbReference type="KEGG" id="vg:5075833"/>
<dbReference type="Proteomes" id="UP000008168">
    <property type="component" value="Genome"/>
</dbReference>
<dbReference type="GO" id="GO:0004725">
    <property type="term" value="F:protein tyrosine phosphatase activity"/>
    <property type="evidence" value="ECO:0007669"/>
    <property type="project" value="UniProtKB-EC"/>
</dbReference>
<dbReference type="Gene3D" id="3.90.190.10">
    <property type="entry name" value="Protein tyrosine phosphatase superfamily"/>
    <property type="match status" value="1"/>
</dbReference>
<dbReference type="InterPro" id="IPR029021">
    <property type="entry name" value="Prot-tyrosine_phosphatase-like"/>
</dbReference>
<dbReference type="InterPro" id="IPR050348">
    <property type="entry name" value="Protein-Tyr_Phosphatase"/>
</dbReference>
<dbReference type="InterPro" id="IPR000242">
    <property type="entry name" value="PTP_cat"/>
</dbReference>
<dbReference type="InterPro" id="IPR003595">
    <property type="entry name" value="Tyr_Pase_cat"/>
</dbReference>
<dbReference type="InterPro" id="IPR000387">
    <property type="entry name" value="Tyr_Pase_dom"/>
</dbReference>
<dbReference type="PANTHER" id="PTHR19134:SF562">
    <property type="entry name" value="PROTEIN-TYROSINE-PHOSPHATASE"/>
    <property type="match status" value="1"/>
</dbReference>
<dbReference type="PANTHER" id="PTHR19134">
    <property type="entry name" value="RECEPTOR-TYPE TYROSINE-PROTEIN PHOSPHATASE"/>
    <property type="match status" value="1"/>
</dbReference>
<dbReference type="Pfam" id="PF00102">
    <property type="entry name" value="Y_phosphatase"/>
    <property type="match status" value="1"/>
</dbReference>
<dbReference type="PRINTS" id="PR00700">
    <property type="entry name" value="PRTYPHPHTASE"/>
</dbReference>
<dbReference type="SMART" id="SM00194">
    <property type="entry name" value="PTPc"/>
    <property type="match status" value="1"/>
</dbReference>
<dbReference type="SMART" id="SM00404">
    <property type="entry name" value="PTPc_motif"/>
    <property type="match status" value="1"/>
</dbReference>
<dbReference type="SUPFAM" id="SSF52799">
    <property type="entry name" value="(Phosphotyrosine protein) phosphatases II"/>
    <property type="match status" value="1"/>
</dbReference>
<dbReference type="PROSITE" id="PS50056">
    <property type="entry name" value="TYR_PHOSPHATASE_2"/>
    <property type="match status" value="1"/>
</dbReference>
<dbReference type="PROSITE" id="PS50055">
    <property type="entry name" value="TYR_PHOSPHATASE_PTP"/>
    <property type="match status" value="1"/>
</dbReference>
<name>PTPN1_MDBVW</name>
<organism>
    <name type="scientific">Microplitis demolitor bracovirus (isolate Webb)</name>
    <name type="common">MdBV</name>
    <dbReference type="NCBI Taxonomy" id="654919"/>
    <lineage>
        <taxon>Viruses</taxon>
        <taxon>Viruses incertae sedis</taxon>
        <taxon>Polydnaviriformidae</taxon>
        <taxon>Bracoviriform</taxon>
        <taxon>Microplitis demolitor bracovirus</taxon>
    </lineage>
</organism>
<reference key="1">
    <citation type="journal article" date="2006" name="Virology">
        <title>Polydnavirus genomes reflect their dual roles as mutualists and pathogens.</title>
        <authorList>
            <person name="Webb B.A."/>
            <person name="Strand M.R."/>
            <person name="Dickey S.E."/>
            <person name="Beck M.H."/>
            <person name="Hilgarth R.S."/>
            <person name="Barney W.E."/>
            <person name="Kadash K."/>
            <person name="Kroemer J.A."/>
            <person name="Lindstrom K.G."/>
            <person name="Rattanadechakul W."/>
            <person name="Shelby K.S."/>
            <person name="Thoetkiattikul H."/>
            <person name="Turnbull M.W."/>
            <person name="Witherell R.A."/>
        </authorList>
    </citation>
    <scope>NUCLEOTIDE SEQUENCE [GENOMIC DNA]</scope>
</reference>
<reference key="2">
    <citation type="journal article" date="2005" name="Proc. Natl. Acad. Sci. U.S.A.">
        <title>Inhibitor kappaB-like proteins from a polydnavirus inhibit NF-kappaB activation and suppress the insect immune response.</title>
        <authorList>
            <person name="Thoetkiattikul H."/>
            <person name="Beck M.H."/>
            <person name="Strand M.R."/>
        </authorList>
    </citation>
    <scope>NUCLEOTIDE SEQUENCE [GENOMIC DNA]</scope>
</reference>
<keyword id="KW-0378">Hydrolase</keyword>
<keyword id="KW-0904">Protein phosphatase</keyword>
<keyword id="KW-1185">Reference proteome</keyword>
<organismHost>
    <name type="scientific">Microplitis demolitor</name>
    <name type="common">Parasitoid wasp</name>
    <dbReference type="NCBI Taxonomy" id="69319"/>
</organismHost>
<sequence length="318" mass="37071">MVVNCFETCRAIDFWNRRNQLNFPGIVRLEHHQVILKPFNGTWENSEKPENQRKNRYNIRCWDHNRVILKSGSGSTSNYIHANYVDGFEDDKKFIITQGPMEETCNDFWKAVWQNNCSIIVMLTPTKGTNGEELCYQYWSLNEDSNIITEDFVIETVNTSVRPTYILTTLRITDKISNDSRRISHYQYTEWPVDETPTNHVDFIKFIKIININRKKSGSNYQQQLLSPIVVHCSDGVKKTGIFCAVDISLNQLVLRKTVSLAKTAEKIRQQRHSTISTPDDYLILQPGYYVLLYLLYKILAIIKIKNCGEKKSRRKST</sequence>
<feature type="chain" id="PRO_0000405373" description="Probable tyrosine phosphatase protein N1">
    <location>
        <begin position="1"/>
        <end position="318"/>
    </location>
</feature>
<feature type="domain" description="Tyrosine-protein phosphatase" evidence="1">
    <location>
        <begin position="26"/>
        <end position="292"/>
    </location>
</feature>
<feature type="active site" description="Phosphocysteine intermediate" evidence="1">
    <location>
        <position position="233"/>
    </location>
</feature>